<feature type="signal peptide" evidence="1">
    <location>
        <begin position="1"/>
        <end position="21"/>
    </location>
</feature>
<feature type="chain" id="PRO_0000035367" description="Cytotoxin 1b">
    <location>
        <begin position="22"/>
        <end position="81"/>
    </location>
</feature>
<feature type="disulfide bond" evidence="2">
    <location>
        <begin position="24"/>
        <end position="42"/>
    </location>
</feature>
<feature type="disulfide bond" evidence="2">
    <location>
        <begin position="35"/>
        <end position="59"/>
    </location>
</feature>
<feature type="disulfide bond" evidence="2">
    <location>
        <begin position="63"/>
        <end position="74"/>
    </location>
</feature>
<feature type="disulfide bond" evidence="2">
    <location>
        <begin position="75"/>
        <end position="80"/>
    </location>
</feature>
<proteinExistence type="inferred from homology"/>
<accession>Q98956</accession>
<keyword id="KW-0123">Cardiotoxin</keyword>
<keyword id="KW-0204">Cytolysis</keyword>
<keyword id="KW-1015">Disulfide bond</keyword>
<keyword id="KW-0472">Membrane</keyword>
<keyword id="KW-0964">Secreted</keyword>
<keyword id="KW-0732">Signal</keyword>
<keyword id="KW-1052">Target cell membrane</keyword>
<keyword id="KW-1053">Target membrane</keyword>
<keyword id="KW-0800">Toxin</keyword>
<comment type="function">
    <text evidence="2 3">Shows cytolytic activity on many different cells by forming pore in lipid membranes. In vivo, increases heart rate or kills the animal by cardiac arrest. In addition, it binds to heparin with high affinity, interacts with Kv channel-interacting protein 1 (KCNIP1) in a calcium-independent manner, and binds to integrin alpha-V/beta-3 (ITGAV/ITGB3) with moderate affinity.</text>
</comment>
<comment type="subunit">
    <text evidence="2">Monomer in solution; Homodimer and oligomer in the presence of negatively charged lipids forming a pore with a size ranging between 20 and 30 Angstroms.</text>
</comment>
<comment type="subcellular location">
    <subcellularLocation>
        <location evidence="1">Secreted</location>
    </subcellularLocation>
    <subcellularLocation>
        <location evidence="2">Target cell membrane</location>
    </subcellularLocation>
</comment>
<comment type="tissue specificity">
    <text evidence="4">Expressed by the venom gland.</text>
</comment>
<comment type="miscellaneous">
    <text evidence="4">Is classified as a S-type cytotoxin, since a serine residue stands at position 49 (Ser-29 in standard classification).</text>
</comment>
<comment type="similarity">
    <text evidence="4">Belongs to the three-finger toxin family. Short-chain subfamily. Type IA cytotoxin sub-subfamily.</text>
</comment>
<sequence>MKTLLLTLVVVTIVCLDLGYTLKCNKLVPIASKTCPAGKNLCYKMFMMSDLTVPVKRGCIDVCPKSSLLVKYVCCNTDICN</sequence>
<reference key="1">
    <citation type="submission" date="1996-05" db="EMBL/GenBank/DDBJ databases">
        <authorList>
            <person name="Chu R.C."/>
            <person name="Yang C.-C."/>
        </authorList>
    </citation>
    <scope>NUCLEOTIDE SEQUENCE [MRNA]</scope>
    <source>
        <tissue>Venom gland</tissue>
    </source>
</reference>
<organism>
    <name type="scientific">Naja atra</name>
    <name type="common">Chinese cobra</name>
    <dbReference type="NCBI Taxonomy" id="8656"/>
    <lineage>
        <taxon>Eukaryota</taxon>
        <taxon>Metazoa</taxon>
        <taxon>Chordata</taxon>
        <taxon>Craniata</taxon>
        <taxon>Vertebrata</taxon>
        <taxon>Euteleostomi</taxon>
        <taxon>Lepidosauria</taxon>
        <taxon>Squamata</taxon>
        <taxon>Bifurcata</taxon>
        <taxon>Unidentata</taxon>
        <taxon>Episquamata</taxon>
        <taxon>Toxicofera</taxon>
        <taxon>Serpentes</taxon>
        <taxon>Colubroidea</taxon>
        <taxon>Elapidae</taxon>
        <taxon>Elapinae</taxon>
        <taxon>Naja</taxon>
    </lineage>
</organism>
<dbReference type="EMBL" id="U58482">
    <property type="protein sequence ID" value="AAB18378.1"/>
    <property type="molecule type" value="mRNA"/>
</dbReference>
<dbReference type="SMR" id="Q98956"/>
<dbReference type="GO" id="GO:0005576">
    <property type="term" value="C:extracellular region"/>
    <property type="evidence" value="ECO:0007669"/>
    <property type="project" value="UniProtKB-SubCell"/>
</dbReference>
<dbReference type="GO" id="GO:0016020">
    <property type="term" value="C:membrane"/>
    <property type="evidence" value="ECO:0007669"/>
    <property type="project" value="UniProtKB-KW"/>
</dbReference>
<dbReference type="GO" id="GO:0044218">
    <property type="term" value="C:other organism cell membrane"/>
    <property type="evidence" value="ECO:0007669"/>
    <property type="project" value="UniProtKB-KW"/>
</dbReference>
<dbReference type="GO" id="GO:0090729">
    <property type="term" value="F:toxin activity"/>
    <property type="evidence" value="ECO:0007669"/>
    <property type="project" value="UniProtKB-KW"/>
</dbReference>
<dbReference type="GO" id="GO:0031640">
    <property type="term" value="P:killing of cells of another organism"/>
    <property type="evidence" value="ECO:0007669"/>
    <property type="project" value="UniProtKB-KW"/>
</dbReference>
<dbReference type="CDD" id="cd00206">
    <property type="entry name" value="TFP_snake_toxin"/>
    <property type="match status" value="1"/>
</dbReference>
<dbReference type="FunFam" id="2.10.60.10:FF:000024">
    <property type="entry name" value="Cytotoxin 1"/>
    <property type="match status" value="1"/>
</dbReference>
<dbReference type="Gene3D" id="2.10.60.10">
    <property type="entry name" value="CD59"/>
    <property type="match status" value="1"/>
</dbReference>
<dbReference type="InterPro" id="IPR003572">
    <property type="entry name" value="Cytotoxin_Cobra"/>
</dbReference>
<dbReference type="InterPro" id="IPR003571">
    <property type="entry name" value="Snake_3FTx"/>
</dbReference>
<dbReference type="InterPro" id="IPR045860">
    <property type="entry name" value="Snake_toxin-like_sf"/>
</dbReference>
<dbReference type="InterPro" id="IPR018354">
    <property type="entry name" value="Snake_toxin_con_site"/>
</dbReference>
<dbReference type="InterPro" id="IPR054131">
    <property type="entry name" value="Toxin_cobra-type"/>
</dbReference>
<dbReference type="Pfam" id="PF21947">
    <property type="entry name" value="Toxin_cobra-type"/>
    <property type="match status" value="1"/>
</dbReference>
<dbReference type="PRINTS" id="PR00282">
    <property type="entry name" value="CYTOTOXIN"/>
</dbReference>
<dbReference type="SUPFAM" id="SSF57302">
    <property type="entry name" value="Snake toxin-like"/>
    <property type="match status" value="1"/>
</dbReference>
<dbReference type="PROSITE" id="PS00272">
    <property type="entry name" value="SNAKE_TOXIN"/>
    <property type="match status" value="1"/>
</dbReference>
<evidence type="ECO:0000250" key="1"/>
<evidence type="ECO:0000250" key="2">
    <source>
        <dbReference type="UniProtKB" id="P60301"/>
    </source>
</evidence>
<evidence type="ECO:0000250" key="3">
    <source>
        <dbReference type="UniProtKB" id="P60304"/>
    </source>
</evidence>
<evidence type="ECO:0000305" key="4"/>
<name>3SA1B_NAJAT</name>
<protein>
    <recommendedName>
        <fullName>Cytotoxin 1b</fullName>
    </recommendedName>
    <alternativeName>
        <fullName>Cardiotoxin-1b</fullName>
    </alternativeName>
</protein>